<accession>Q1QT66</accession>
<feature type="chain" id="PRO_1000071867" description="Lysine--tRNA ligase">
    <location>
        <begin position="1"/>
        <end position="502"/>
    </location>
</feature>
<feature type="binding site" evidence="1">
    <location>
        <position position="411"/>
    </location>
    <ligand>
        <name>Mg(2+)</name>
        <dbReference type="ChEBI" id="CHEBI:18420"/>
        <label>1</label>
    </ligand>
</feature>
<feature type="binding site" evidence="1">
    <location>
        <position position="418"/>
    </location>
    <ligand>
        <name>Mg(2+)</name>
        <dbReference type="ChEBI" id="CHEBI:18420"/>
        <label>1</label>
    </ligand>
</feature>
<feature type="binding site" evidence="1">
    <location>
        <position position="418"/>
    </location>
    <ligand>
        <name>Mg(2+)</name>
        <dbReference type="ChEBI" id="CHEBI:18420"/>
        <label>2</label>
    </ligand>
</feature>
<proteinExistence type="inferred from homology"/>
<comment type="catalytic activity">
    <reaction evidence="1">
        <text>tRNA(Lys) + L-lysine + ATP = L-lysyl-tRNA(Lys) + AMP + diphosphate</text>
        <dbReference type="Rhea" id="RHEA:20792"/>
        <dbReference type="Rhea" id="RHEA-COMP:9696"/>
        <dbReference type="Rhea" id="RHEA-COMP:9697"/>
        <dbReference type="ChEBI" id="CHEBI:30616"/>
        <dbReference type="ChEBI" id="CHEBI:32551"/>
        <dbReference type="ChEBI" id="CHEBI:33019"/>
        <dbReference type="ChEBI" id="CHEBI:78442"/>
        <dbReference type="ChEBI" id="CHEBI:78529"/>
        <dbReference type="ChEBI" id="CHEBI:456215"/>
        <dbReference type="EC" id="6.1.1.6"/>
    </reaction>
</comment>
<comment type="cofactor">
    <cofactor evidence="1">
        <name>Mg(2+)</name>
        <dbReference type="ChEBI" id="CHEBI:18420"/>
    </cofactor>
    <text evidence="1">Binds 3 Mg(2+) ions per subunit.</text>
</comment>
<comment type="subunit">
    <text evidence="1">Homodimer.</text>
</comment>
<comment type="subcellular location">
    <subcellularLocation>
        <location evidence="1">Cytoplasm</location>
    </subcellularLocation>
</comment>
<comment type="similarity">
    <text evidence="1">Belongs to the class-II aminoacyl-tRNA synthetase family.</text>
</comment>
<protein>
    <recommendedName>
        <fullName evidence="1">Lysine--tRNA ligase</fullName>
        <ecNumber evidence="1">6.1.1.6</ecNumber>
    </recommendedName>
    <alternativeName>
        <fullName evidence="1">Lysyl-tRNA synthetase</fullName>
        <shortName evidence="1">LysRS</shortName>
    </alternativeName>
</protein>
<reference key="1">
    <citation type="journal article" date="2011" name="Stand. Genomic Sci.">
        <title>Complete genome sequence of the halophilic and highly halotolerant Chromohalobacter salexigens type strain (1H11(T)).</title>
        <authorList>
            <person name="Copeland A."/>
            <person name="O'Connor K."/>
            <person name="Lucas S."/>
            <person name="Lapidus A."/>
            <person name="Berry K.W."/>
            <person name="Detter J.C."/>
            <person name="Del Rio T.G."/>
            <person name="Hammon N."/>
            <person name="Dalin E."/>
            <person name="Tice H."/>
            <person name="Pitluck S."/>
            <person name="Bruce D."/>
            <person name="Goodwin L."/>
            <person name="Han C."/>
            <person name="Tapia R."/>
            <person name="Saunders E."/>
            <person name="Schmutz J."/>
            <person name="Brettin T."/>
            <person name="Larimer F."/>
            <person name="Land M."/>
            <person name="Hauser L."/>
            <person name="Vargas C."/>
            <person name="Nieto J.J."/>
            <person name="Kyrpides N.C."/>
            <person name="Ivanova N."/>
            <person name="Goker M."/>
            <person name="Klenk H.P."/>
            <person name="Csonka L.N."/>
            <person name="Woyke T."/>
        </authorList>
    </citation>
    <scope>NUCLEOTIDE SEQUENCE [LARGE SCALE GENOMIC DNA]</scope>
    <source>
        <strain>ATCC BAA-138 / DSM 3043 / CIP 106854 / NCIMB 13768 / 1H11</strain>
    </source>
</reference>
<evidence type="ECO:0000255" key="1">
    <source>
        <dbReference type="HAMAP-Rule" id="MF_00252"/>
    </source>
</evidence>
<organism>
    <name type="scientific">Chromohalobacter salexigens (strain ATCC BAA-138 / DSM 3043 / CIP 106854 / NCIMB 13768 / 1H11)</name>
    <dbReference type="NCBI Taxonomy" id="290398"/>
    <lineage>
        <taxon>Bacteria</taxon>
        <taxon>Pseudomonadati</taxon>
        <taxon>Pseudomonadota</taxon>
        <taxon>Gammaproteobacteria</taxon>
        <taxon>Oceanospirillales</taxon>
        <taxon>Halomonadaceae</taxon>
        <taxon>Chromohalobacter</taxon>
    </lineage>
</organism>
<sequence length="502" mass="56650">MANQDAAQHDENHLIAERRAKLAARRDQAAEAGGSAFPNDFRRDSLAAELQAELGDKDKAELETLDRRASVAGRIMRKRGPFIVIQDVSDQIQLYVDKKGLPAETLDDIKSWDIGDIVAARGPVHKSGKGDLYVMMGEAQLLTKSLRPLPDKYHGLTDTEARYRQRYVDLIMNPESRRVFEVRSRVISGIRRFLVERGFMEVETPMLQQIPGGATARPFVTHHNALDIDMYLRVAPELYLKRLVVGGFERVFEINRNFRNEGLSTRHNPEFTMLEFYWAYADYRDLLDLTEAMIRDVAHEVLGTTTVEYQGARYELGEPFQRLTLRQSILEYGDGLGESDIDTFDGARATCERLGIPVKPSWGLGKLQTEIFEAVAEDKLDRPTFITEYPAEVSPLARRNDTNPHVTDRFEFFVGGRELANGFSELNDAEDQAERFAAQAAEKDAGDLEAMYYDADYVRALEYGMPPTAGEGIGIDRLVMLLTDSPSIRDVLLFPAMRPSAD</sequence>
<keyword id="KW-0030">Aminoacyl-tRNA synthetase</keyword>
<keyword id="KW-0067">ATP-binding</keyword>
<keyword id="KW-0963">Cytoplasm</keyword>
<keyword id="KW-0436">Ligase</keyword>
<keyword id="KW-0460">Magnesium</keyword>
<keyword id="KW-0479">Metal-binding</keyword>
<keyword id="KW-0547">Nucleotide-binding</keyword>
<keyword id="KW-0648">Protein biosynthesis</keyword>
<keyword id="KW-1185">Reference proteome</keyword>
<dbReference type="EC" id="6.1.1.6" evidence="1"/>
<dbReference type="EMBL" id="CP000285">
    <property type="protein sequence ID" value="ABE60342.1"/>
    <property type="molecule type" value="Genomic_DNA"/>
</dbReference>
<dbReference type="RefSeq" id="WP_011508288.1">
    <property type="nucleotide sequence ID" value="NC_007963.1"/>
</dbReference>
<dbReference type="SMR" id="Q1QT66"/>
<dbReference type="STRING" id="290398.Csal_2997"/>
<dbReference type="GeneID" id="95335686"/>
<dbReference type="KEGG" id="csa:Csal_2997"/>
<dbReference type="eggNOG" id="COG1190">
    <property type="taxonomic scope" value="Bacteria"/>
</dbReference>
<dbReference type="HOGENOM" id="CLU_008255_6_0_6"/>
<dbReference type="OrthoDB" id="9802326at2"/>
<dbReference type="Proteomes" id="UP000000239">
    <property type="component" value="Chromosome"/>
</dbReference>
<dbReference type="GO" id="GO:0005829">
    <property type="term" value="C:cytosol"/>
    <property type="evidence" value="ECO:0007669"/>
    <property type="project" value="TreeGrafter"/>
</dbReference>
<dbReference type="GO" id="GO:0005524">
    <property type="term" value="F:ATP binding"/>
    <property type="evidence" value="ECO:0007669"/>
    <property type="project" value="UniProtKB-UniRule"/>
</dbReference>
<dbReference type="GO" id="GO:0004824">
    <property type="term" value="F:lysine-tRNA ligase activity"/>
    <property type="evidence" value="ECO:0007669"/>
    <property type="project" value="UniProtKB-UniRule"/>
</dbReference>
<dbReference type="GO" id="GO:0000287">
    <property type="term" value="F:magnesium ion binding"/>
    <property type="evidence" value="ECO:0007669"/>
    <property type="project" value="UniProtKB-UniRule"/>
</dbReference>
<dbReference type="GO" id="GO:0000049">
    <property type="term" value="F:tRNA binding"/>
    <property type="evidence" value="ECO:0007669"/>
    <property type="project" value="TreeGrafter"/>
</dbReference>
<dbReference type="GO" id="GO:0006430">
    <property type="term" value="P:lysyl-tRNA aminoacylation"/>
    <property type="evidence" value="ECO:0007669"/>
    <property type="project" value="UniProtKB-UniRule"/>
</dbReference>
<dbReference type="CDD" id="cd00775">
    <property type="entry name" value="LysRS_core"/>
    <property type="match status" value="1"/>
</dbReference>
<dbReference type="CDD" id="cd04322">
    <property type="entry name" value="LysRS_N"/>
    <property type="match status" value="1"/>
</dbReference>
<dbReference type="FunFam" id="3.30.930.10:FF:000001">
    <property type="entry name" value="Lysine--tRNA ligase"/>
    <property type="match status" value="1"/>
</dbReference>
<dbReference type="Gene3D" id="3.30.930.10">
    <property type="entry name" value="Bira Bifunctional Protein, Domain 2"/>
    <property type="match status" value="1"/>
</dbReference>
<dbReference type="Gene3D" id="2.40.50.140">
    <property type="entry name" value="Nucleic acid-binding proteins"/>
    <property type="match status" value="1"/>
</dbReference>
<dbReference type="HAMAP" id="MF_00252">
    <property type="entry name" value="Lys_tRNA_synth_class2"/>
    <property type="match status" value="1"/>
</dbReference>
<dbReference type="InterPro" id="IPR004364">
    <property type="entry name" value="Aa-tRNA-synt_II"/>
</dbReference>
<dbReference type="InterPro" id="IPR006195">
    <property type="entry name" value="aa-tRNA-synth_II"/>
</dbReference>
<dbReference type="InterPro" id="IPR045864">
    <property type="entry name" value="aa-tRNA-synth_II/BPL/LPL"/>
</dbReference>
<dbReference type="InterPro" id="IPR002313">
    <property type="entry name" value="Lys-tRNA-ligase_II"/>
</dbReference>
<dbReference type="InterPro" id="IPR044136">
    <property type="entry name" value="Lys-tRNA-ligase_II_N"/>
</dbReference>
<dbReference type="InterPro" id="IPR018149">
    <property type="entry name" value="Lys-tRNA-synth_II_C"/>
</dbReference>
<dbReference type="InterPro" id="IPR012340">
    <property type="entry name" value="NA-bd_OB-fold"/>
</dbReference>
<dbReference type="InterPro" id="IPR004365">
    <property type="entry name" value="NA-bd_OB_tRNA"/>
</dbReference>
<dbReference type="NCBIfam" id="TIGR00499">
    <property type="entry name" value="lysS_bact"/>
    <property type="match status" value="1"/>
</dbReference>
<dbReference type="NCBIfam" id="NF001756">
    <property type="entry name" value="PRK00484.1"/>
    <property type="match status" value="1"/>
</dbReference>
<dbReference type="PANTHER" id="PTHR42918:SF15">
    <property type="entry name" value="LYSINE--TRNA LIGASE, CHLOROPLASTIC_MITOCHONDRIAL"/>
    <property type="match status" value="1"/>
</dbReference>
<dbReference type="PANTHER" id="PTHR42918">
    <property type="entry name" value="LYSYL-TRNA SYNTHETASE"/>
    <property type="match status" value="1"/>
</dbReference>
<dbReference type="Pfam" id="PF00152">
    <property type="entry name" value="tRNA-synt_2"/>
    <property type="match status" value="1"/>
</dbReference>
<dbReference type="Pfam" id="PF01336">
    <property type="entry name" value="tRNA_anti-codon"/>
    <property type="match status" value="1"/>
</dbReference>
<dbReference type="PRINTS" id="PR00982">
    <property type="entry name" value="TRNASYNTHLYS"/>
</dbReference>
<dbReference type="SUPFAM" id="SSF55681">
    <property type="entry name" value="Class II aaRS and biotin synthetases"/>
    <property type="match status" value="1"/>
</dbReference>
<dbReference type="SUPFAM" id="SSF50249">
    <property type="entry name" value="Nucleic acid-binding proteins"/>
    <property type="match status" value="1"/>
</dbReference>
<dbReference type="PROSITE" id="PS50862">
    <property type="entry name" value="AA_TRNA_LIGASE_II"/>
    <property type="match status" value="1"/>
</dbReference>
<name>SYK_CHRSD</name>
<gene>
    <name evidence="1" type="primary">lysS</name>
    <name type="ordered locus">Csal_2997</name>
</gene>